<comment type="function">
    <text evidence="1">Specifically methylates the ribose of guanosine 2251 in 23S rRNA.</text>
</comment>
<comment type="catalytic activity">
    <reaction evidence="1">
        <text>guanosine(2251) in 23S rRNA + S-adenosyl-L-methionine = 2'-O-methylguanosine(2251) in 23S rRNA + S-adenosyl-L-homocysteine + H(+)</text>
        <dbReference type="Rhea" id="RHEA:24140"/>
        <dbReference type="Rhea" id="RHEA-COMP:10239"/>
        <dbReference type="Rhea" id="RHEA-COMP:10241"/>
        <dbReference type="ChEBI" id="CHEBI:15378"/>
        <dbReference type="ChEBI" id="CHEBI:57856"/>
        <dbReference type="ChEBI" id="CHEBI:59789"/>
        <dbReference type="ChEBI" id="CHEBI:74269"/>
        <dbReference type="ChEBI" id="CHEBI:74445"/>
        <dbReference type="EC" id="2.1.1.185"/>
    </reaction>
</comment>
<comment type="subcellular location">
    <subcellularLocation>
        <location evidence="1">Cytoplasm</location>
    </subcellularLocation>
</comment>
<comment type="similarity">
    <text evidence="1">Belongs to the class IV-like SAM-binding methyltransferase superfamily. RNA methyltransferase TrmH family. RlmB subfamily.</text>
</comment>
<sequence length="249" mass="26632">MNKKNQWIVGINAVVSSIENDAEHVCEVLVEAGSKNSRLLDIEENARRKGIEVRRVTTQALDGVGGGVRHQGVAARYAAVRLWEEHDLKDLVDAAGGQALLLVLDGVQDPHNLGACLRSAAAAGVTAVIIPKDKSVGINATVRKTSSGAADRLPVIAVVNLARSLRELQKQDVWIYGLEGEAETSLYALDLRGKVALVLGGEADGLRRLTREHCDVLARIPMPGEVESLNVSVAAGVTLFEAVRQRTLV</sequence>
<protein>
    <recommendedName>
        <fullName evidence="1">23S rRNA (guanosine-2'-O-)-methyltransferase RlmB</fullName>
        <ecNumber evidence="1">2.1.1.185</ecNumber>
    </recommendedName>
    <alternativeName>
        <fullName evidence="1">23S rRNA (guanosine2251 2'-O)-methyltransferase</fullName>
    </alternativeName>
    <alternativeName>
        <fullName evidence="1">23S rRNA Gm2251 2'-O-methyltransferase</fullName>
    </alternativeName>
</protein>
<dbReference type="EC" id="2.1.1.185" evidence="1"/>
<dbReference type="EMBL" id="AE003849">
    <property type="protein sequence ID" value="AAF84787.1"/>
    <property type="molecule type" value="Genomic_DNA"/>
</dbReference>
<dbReference type="PIR" id="D82613">
    <property type="entry name" value="D82613"/>
</dbReference>
<dbReference type="RefSeq" id="WP_010894443.1">
    <property type="nucleotide sequence ID" value="NC_002488.3"/>
</dbReference>
<dbReference type="SMR" id="Q9PC00"/>
<dbReference type="STRING" id="160492.XF_1985"/>
<dbReference type="KEGG" id="xfa:XF_1985"/>
<dbReference type="eggNOG" id="COG0566">
    <property type="taxonomic scope" value="Bacteria"/>
</dbReference>
<dbReference type="HOGENOM" id="CLU_021322_0_1_6"/>
<dbReference type="Proteomes" id="UP000000812">
    <property type="component" value="Chromosome"/>
</dbReference>
<dbReference type="GO" id="GO:0005829">
    <property type="term" value="C:cytosol"/>
    <property type="evidence" value="ECO:0007669"/>
    <property type="project" value="TreeGrafter"/>
</dbReference>
<dbReference type="GO" id="GO:0003723">
    <property type="term" value="F:RNA binding"/>
    <property type="evidence" value="ECO:0007669"/>
    <property type="project" value="InterPro"/>
</dbReference>
<dbReference type="GO" id="GO:0070039">
    <property type="term" value="F:rRNA (guanosine-2'-O-)-methyltransferase activity"/>
    <property type="evidence" value="ECO:0007669"/>
    <property type="project" value="UniProtKB-UniRule"/>
</dbReference>
<dbReference type="CDD" id="cd18103">
    <property type="entry name" value="SpoU-like_RlmB"/>
    <property type="match status" value="1"/>
</dbReference>
<dbReference type="FunFam" id="3.40.1280.10:FF:000008">
    <property type="entry name" value="Group 3 RNA methyltransferase TrmH"/>
    <property type="match status" value="1"/>
</dbReference>
<dbReference type="Gene3D" id="3.30.1330.30">
    <property type="match status" value="1"/>
</dbReference>
<dbReference type="Gene3D" id="3.40.1280.10">
    <property type="match status" value="1"/>
</dbReference>
<dbReference type="HAMAP" id="MF_01887">
    <property type="entry name" value="23SrRNA_methyltr_B"/>
    <property type="match status" value="1"/>
</dbReference>
<dbReference type="InterPro" id="IPR024915">
    <property type="entry name" value="23S_rRNA_MeTrfase_RlmB"/>
</dbReference>
<dbReference type="InterPro" id="IPR029028">
    <property type="entry name" value="Alpha/beta_knot_MTases"/>
</dbReference>
<dbReference type="InterPro" id="IPR029064">
    <property type="entry name" value="Ribosomal_eL30-like_sf"/>
</dbReference>
<dbReference type="InterPro" id="IPR004441">
    <property type="entry name" value="rRNA_MeTrfase_TrmH"/>
</dbReference>
<dbReference type="InterPro" id="IPR001537">
    <property type="entry name" value="SpoU_MeTrfase"/>
</dbReference>
<dbReference type="InterPro" id="IPR013123">
    <property type="entry name" value="SpoU_subst-bd"/>
</dbReference>
<dbReference type="InterPro" id="IPR029026">
    <property type="entry name" value="tRNA_m1G_MTases_N"/>
</dbReference>
<dbReference type="NCBIfam" id="TIGR00186">
    <property type="entry name" value="rRNA_methyl_3"/>
    <property type="match status" value="1"/>
</dbReference>
<dbReference type="PANTHER" id="PTHR46429">
    <property type="entry name" value="23S RRNA (GUANOSINE-2'-O-)-METHYLTRANSFERASE RLMB"/>
    <property type="match status" value="1"/>
</dbReference>
<dbReference type="PANTHER" id="PTHR46429:SF1">
    <property type="entry name" value="23S RRNA (GUANOSINE-2'-O-)-METHYLTRANSFERASE RLMB"/>
    <property type="match status" value="1"/>
</dbReference>
<dbReference type="Pfam" id="PF00588">
    <property type="entry name" value="SpoU_methylase"/>
    <property type="match status" value="1"/>
</dbReference>
<dbReference type="Pfam" id="PF08032">
    <property type="entry name" value="SpoU_sub_bind"/>
    <property type="match status" value="1"/>
</dbReference>
<dbReference type="SMART" id="SM00967">
    <property type="entry name" value="SpoU_sub_bind"/>
    <property type="match status" value="1"/>
</dbReference>
<dbReference type="SUPFAM" id="SSF75217">
    <property type="entry name" value="alpha/beta knot"/>
    <property type="match status" value="1"/>
</dbReference>
<dbReference type="SUPFAM" id="SSF55315">
    <property type="entry name" value="L30e-like"/>
    <property type="match status" value="1"/>
</dbReference>
<reference key="1">
    <citation type="journal article" date="2000" name="Nature">
        <title>The genome sequence of the plant pathogen Xylella fastidiosa.</title>
        <authorList>
            <person name="Simpson A.J.G."/>
            <person name="Reinach F.C."/>
            <person name="Arruda P."/>
            <person name="Abreu F.A."/>
            <person name="Acencio M."/>
            <person name="Alvarenga R."/>
            <person name="Alves L.M.C."/>
            <person name="Araya J.E."/>
            <person name="Baia G.S."/>
            <person name="Baptista C.S."/>
            <person name="Barros M.H."/>
            <person name="Bonaccorsi E.D."/>
            <person name="Bordin S."/>
            <person name="Bove J.M."/>
            <person name="Briones M.R.S."/>
            <person name="Bueno M.R.P."/>
            <person name="Camargo A.A."/>
            <person name="Camargo L.E.A."/>
            <person name="Carraro D.M."/>
            <person name="Carrer H."/>
            <person name="Colauto N.B."/>
            <person name="Colombo C."/>
            <person name="Costa F.F."/>
            <person name="Costa M.C.R."/>
            <person name="Costa-Neto C.M."/>
            <person name="Coutinho L.L."/>
            <person name="Cristofani M."/>
            <person name="Dias-Neto E."/>
            <person name="Docena C."/>
            <person name="El-Dorry H."/>
            <person name="Facincani A.P."/>
            <person name="Ferreira A.J.S."/>
            <person name="Ferreira V.C.A."/>
            <person name="Ferro J.A."/>
            <person name="Fraga J.S."/>
            <person name="Franca S.C."/>
            <person name="Franco M.C."/>
            <person name="Frohme M."/>
            <person name="Furlan L.R."/>
            <person name="Garnier M."/>
            <person name="Goldman G.H."/>
            <person name="Goldman M.H.S."/>
            <person name="Gomes S.L."/>
            <person name="Gruber A."/>
            <person name="Ho P.L."/>
            <person name="Hoheisel J.D."/>
            <person name="Junqueira M.L."/>
            <person name="Kemper E.L."/>
            <person name="Kitajima J.P."/>
            <person name="Krieger J.E."/>
            <person name="Kuramae E.E."/>
            <person name="Laigret F."/>
            <person name="Lambais M.R."/>
            <person name="Leite L.C.C."/>
            <person name="Lemos E.G.M."/>
            <person name="Lemos M.V.F."/>
            <person name="Lopes S.A."/>
            <person name="Lopes C.R."/>
            <person name="Machado J.A."/>
            <person name="Machado M.A."/>
            <person name="Madeira A.M.B.N."/>
            <person name="Madeira H.M.F."/>
            <person name="Marino C.L."/>
            <person name="Marques M.V."/>
            <person name="Martins E.A.L."/>
            <person name="Martins E.M.F."/>
            <person name="Matsukuma A.Y."/>
            <person name="Menck C.F.M."/>
            <person name="Miracca E.C."/>
            <person name="Miyaki C.Y."/>
            <person name="Monteiro-Vitorello C.B."/>
            <person name="Moon D.H."/>
            <person name="Nagai M.A."/>
            <person name="Nascimento A.L.T.O."/>
            <person name="Netto L.E.S."/>
            <person name="Nhani A. Jr."/>
            <person name="Nobrega F.G."/>
            <person name="Nunes L.R."/>
            <person name="Oliveira M.A."/>
            <person name="de Oliveira M.C."/>
            <person name="de Oliveira R.C."/>
            <person name="Palmieri D.A."/>
            <person name="Paris A."/>
            <person name="Peixoto B.R."/>
            <person name="Pereira G.A.G."/>
            <person name="Pereira H.A. Jr."/>
            <person name="Pesquero J.B."/>
            <person name="Quaggio R.B."/>
            <person name="Roberto P.G."/>
            <person name="Rodrigues V."/>
            <person name="de Rosa A.J.M."/>
            <person name="de Rosa V.E. Jr."/>
            <person name="de Sa R.G."/>
            <person name="Santelli R.V."/>
            <person name="Sawasaki H.E."/>
            <person name="da Silva A.C.R."/>
            <person name="da Silva A.M."/>
            <person name="da Silva F.R."/>
            <person name="Silva W.A. Jr."/>
            <person name="da Silveira J.F."/>
            <person name="Silvestri M.L.Z."/>
            <person name="Siqueira W.J."/>
            <person name="de Souza A.A."/>
            <person name="de Souza A.P."/>
            <person name="Terenzi M.F."/>
            <person name="Truffi D."/>
            <person name="Tsai S.M."/>
            <person name="Tsuhako M.H."/>
            <person name="Vallada H."/>
            <person name="Van Sluys M.A."/>
            <person name="Verjovski-Almeida S."/>
            <person name="Vettore A.L."/>
            <person name="Zago M.A."/>
            <person name="Zatz M."/>
            <person name="Meidanis J."/>
            <person name="Setubal J.C."/>
        </authorList>
    </citation>
    <scope>NUCLEOTIDE SEQUENCE [LARGE SCALE GENOMIC DNA]</scope>
    <source>
        <strain>9a5c</strain>
    </source>
</reference>
<feature type="chain" id="PRO_0000159811" description="23S rRNA (guanosine-2'-O-)-methyltransferase RlmB">
    <location>
        <begin position="1"/>
        <end position="249"/>
    </location>
</feature>
<feature type="binding site" evidence="1">
    <location>
        <position position="200"/>
    </location>
    <ligand>
        <name>S-adenosyl-L-methionine</name>
        <dbReference type="ChEBI" id="CHEBI:59789"/>
    </ligand>
</feature>
<feature type="binding site" evidence="1">
    <location>
        <position position="220"/>
    </location>
    <ligand>
        <name>S-adenosyl-L-methionine</name>
        <dbReference type="ChEBI" id="CHEBI:59789"/>
    </ligand>
</feature>
<feature type="binding site" evidence="1">
    <location>
        <position position="229"/>
    </location>
    <ligand>
        <name>S-adenosyl-L-methionine</name>
        <dbReference type="ChEBI" id="CHEBI:59789"/>
    </ligand>
</feature>
<gene>
    <name evidence="1" type="primary">rlmB</name>
    <name type="ordered locus">XF_1985</name>
</gene>
<accession>Q9PC00</accession>
<evidence type="ECO:0000255" key="1">
    <source>
        <dbReference type="HAMAP-Rule" id="MF_01887"/>
    </source>
</evidence>
<organism>
    <name type="scientific">Xylella fastidiosa (strain 9a5c)</name>
    <dbReference type="NCBI Taxonomy" id="160492"/>
    <lineage>
        <taxon>Bacteria</taxon>
        <taxon>Pseudomonadati</taxon>
        <taxon>Pseudomonadota</taxon>
        <taxon>Gammaproteobacteria</taxon>
        <taxon>Lysobacterales</taxon>
        <taxon>Lysobacteraceae</taxon>
        <taxon>Xylella</taxon>
    </lineage>
</organism>
<proteinExistence type="inferred from homology"/>
<keyword id="KW-0963">Cytoplasm</keyword>
<keyword id="KW-0489">Methyltransferase</keyword>
<keyword id="KW-0698">rRNA processing</keyword>
<keyword id="KW-0949">S-adenosyl-L-methionine</keyword>
<keyword id="KW-0808">Transferase</keyword>
<name>RLMB_XYLFA</name>